<protein>
    <recommendedName>
        <fullName evidence="1">Bifunctional protein FolD</fullName>
    </recommendedName>
    <domain>
        <recommendedName>
            <fullName evidence="1">Methylenetetrahydrofolate dehydrogenase</fullName>
            <ecNumber evidence="1">1.5.1.5</ecNumber>
        </recommendedName>
    </domain>
    <domain>
        <recommendedName>
            <fullName evidence="1">Methenyltetrahydrofolate cyclohydrolase</fullName>
            <ecNumber evidence="1">3.5.4.9</ecNumber>
        </recommendedName>
    </domain>
</protein>
<reference key="1">
    <citation type="submission" date="2008-06" db="EMBL/GenBank/DDBJ databases">
        <title>Complete sequence of Chlorobium phaeobacteroides BS1.</title>
        <authorList>
            <consortium name="US DOE Joint Genome Institute"/>
            <person name="Lucas S."/>
            <person name="Copeland A."/>
            <person name="Lapidus A."/>
            <person name="Glavina del Rio T."/>
            <person name="Dalin E."/>
            <person name="Tice H."/>
            <person name="Bruce D."/>
            <person name="Goodwin L."/>
            <person name="Pitluck S."/>
            <person name="Schmutz J."/>
            <person name="Larimer F."/>
            <person name="Land M."/>
            <person name="Hauser L."/>
            <person name="Kyrpides N."/>
            <person name="Ovchinnikova G."/>
            <person name="Li T."/>
            <person name="Liu Z."/>
            <person name="Zhao F."/>
            <person name="Overmann J."/>
            <person name="Bryant D.A."/>
            <person name="Richardson P."/>
        </authorList>
    </citation>
    <scope>NUCLEOTIDE SEQUENCE [LARGE SCALE GENOMIC DNA]</scope>
    <source>
        <strain>BS1</strain>
    </source>
</reference>
<organism>
    <name type="scientific">Chlorobium phaeobacteroides (strain BS1)</name>
    <dbReference type="NCBI Taxonomy" id="331678"/>
    <lineage>
        <taxon>Bacteria</taxon>
        <taxon>Pseudomonadati</taxon>
        <taxon>Chlorobiota</taxon>
        <taxon>Chlorobiia</taxon>
        <taxon>Chlorobiales</taxon>
        <taxon>Chlorobiaceae</taxon>
        <taxon>Chlorobium/Pelodictyon group</taxon>
        <taxon>Chlorobium</taxon>
    </lineage>
</organism>
<sequence length="298" mass="32245">MTIIDGKQVSANLKQELKTAVEACRQKTDAVPGLTVIIVGEDPASQVYVRNKSKSCKEIGMNSTVIELPAETTEAELLAGIEALNNDNDVHGILVQQPLPAHIDDYAVTMAILPSKDVDGFHPENVGQMVLGNLDKCFISCTPYGILELFSRYSIETKGKHCVVIGRSNIVGKPMANLMLQKLKESNCTVTICHSATSNMPEITRQADIVIAAIGRPEYVTEDMIKPGAVVIDVGINRVEDPSRKSGYRLVGDVDYENVNKKASAITPVPGGVGPMTIAMLLKNTLQSFMRVHNIESA</sequence>
<keyword id="KW-0028">Amino-acid biosynthesis</keyword>
<keyword id="KW-0368">Histidine biosynthesis</keyword>
<keyword id="KW-0378">Hydrolase</keyword>
<keyword id="KW-0486">Methionine biosynthesis</keyword>
<keyword id="KW-0511">Multifunctional enzyme</keyword>
<keyword id="KW-0521">NADP</keyword>
<keyword id="KW-0554">One-carbon metabolism</keyword>
<keyword id="KW-0560">Oxidoreductase</keyword>
<keyword id="KW-0658">Purine biosynthesis</keyword>
<comment type="function">
    <text evidence="1">Catalyzes the oxidation of 5,10-methylenetetrahydrofolate to 5,10-methenyltetrahydrofolate and then the hydrolysis of 5,10-methenyltetrahydrofolate to 10-formyltetrahydrofolate.</text>
</comment>
<comment type="catalytic activity">
    <reaction evidence="1">
        <text>(6R)-5,10-methylene-5,6,7,8-tetrahydrofolate + NADP(+) = (6R)-5,10-methenyltetrahydrofolate + NADPH</text>
        <dbReference type="Rhea" id="RHEA:22812"/>
        <dbReference type="ChEBI" id="CHEBI:15636"/>
        <dbReference type="ChEBI" id="CHEBI:57455"/>
        <dbReference type="ChEBI" id="CHEBI:57783"/>
        <dbReference type="ChEBI" id="CHEBI:58349"/>
        <dbReference type="EC" id="1.5.1.5"/>
    </reaction>
</comment>
<comment type="catalytic activity">
    <reaction evidence="1">
        <text>(6R)-5,10-methenyltetrahydrofolate + H2O = (6R)-10-formyltetrahydrofolate + H(+)</text>
        <dbReference type="Rhea" id="RHEA:23700"/>
        <dbReference type="ChEBI" id="CHEBI:15377"/>
        <dbReference type="ChEBI" id="CHEBI:15378"/>
        <dbReference type="ChEBI" id="CHEBI:57455"/>
        <dbReference type="ChEBI" id="CHEBI:195366"/>
        <dbReference type="EC" id="3.5.4.9"/>
    </reaction>
</comment>
<comment type="pathway">
    <text evidence="1">One-carbon metabolism; tetrahydrofolate interconversion.</text>
</comment>
<comment type="subunit">
    <text evidence="1">Homodimer.</text>
</comment>
<comment type="similarity">
    <text evidence="1">Belongs to the tetrahydrofolate dehydrogenase/cyclohydrolase family.</text>
</comment>
<dbReference type="EC" id="1.5.1.5" evidence="1"/>
<dbReference type="EC" id="3.5.4.9" evidence="1"/>
<dbReference type="EMBL" id="CP001101">
    <property type="protein sequence ID" value="ACE04369.1"/>
    <property type="molecule type" value="Genomic_DNA"/>
</dbReference>
<dbReference type="SMR" id="B3EJG9"/>
<dbReference type="STRING" id="331678.Cphamn1_1442"/>
<dbReference type="KEGG" id="cpb:Cphamn1_1442"/>
<dbReference type="eggNOG" id="COG0190">
    <property type="taxonomic scope" value="Bacteria"/>
</dbReference>
<dbReference type="HOGENOM" id="CLU_034045_2_1_10"/>
<dbReference type="OrthoDB" id="9803580at2"/>
<dbReference type="UniPathway" id="UPA00193"/>
<dbReference type="GO" id="GO:0005829">
    <property type="term" value="C:cytosol"/>
    <property type="evidence" value="ECO:0007669"/>
    <property type="project" value="TreeGrafter"/>
</dbReference>
<dbReference type="GO" id="GO:0004477">
    <property type="term" value="F:methenyltetrahydrofolate cyclohydrolase activity"/>
    <property type="evidence" value="ECO:0007669"/>
    <property type="project" value="UniProtKB-UniRule"/>
</dbReference>
<dbReference type="GO" id="GO:0004488">
    <property type="term" value="F:methylenetetrahydrofolate dehydrogenase (NADP+) activity"/>
    <property type="evidence" value="ECO:0007669"/>
    <property type="project" value="UniProtKB-UniRule"/>
</dbReference>
<dbReference type="GO" id="GO:0000105">
    <property type="term" value="P:L-histidine biosynthetic process"/>
    <property type="evidence" value="ECO:0007669"/>
    <property type="project" value="UniProtKB-KW"/>
</dbReference>
<dbReference type="GO" id="GO:0009086">
    <property type="term" value="P:methionine biosynthetic process"/>
    <property type="evidence" value="ECO:0007669"/>
    <property type="project" value="UniProtKB-KW"/>
</dbReference>
<dbReference type="GO" id="GO:0006164">
    <property type="term" value="P:purine nucleotide biosynthetic process"/>
    <property type="evidence" value="ECO:0007669"/>
    <property type="project" value="UniProtKB-KW"/>
</dbReference>
<dbReference type="GO" id="GO:0035999">
    <property type="term" value="P:tetrahydrofolate interconversion"/>
    <property type="evidence" value="ECO:0007669"/>
    <property type="project" value="UniProtKB-UniRule"/>
</dbReference>
<dbReference type="CDD" id="cd01080">
    <property type="entry name" value="NAD_bind_m-THF_DH_Cyclohyd"/>
    <property type="match status" value="1"/>
</dbReference>
<dbReference type="FunFam" id="3.40.50.720:FF:000189">
    <property type="entry name" value="Bifunctional protein FolD"/>
    <property type="match status" value="1"/>
</dbReference>
<dbReference type="FunFam" id="3.40.50.10860:FF:000005">
    <property type="entry name" value="C-1-tetrahydrofolate synthase, cytoplasmic, putative"/>
    <property type="match status" value="1"/>
</dbReference>
<dbReference type="Gene3D" id="3.40.50.10860">
    <property type="entry name" value="Leucine Dehydrogenase, chain A, domain 1"/>
    <property type="match status" value="1"/>
</dbReference>
<dbReference type="Gene3D" id="3.40.50.720">
    <property type="entry name" value="NAD(P)-binding Rossmann-like Domain"/>
    <property type="match status" value="1"/>
</dbReference>
<dbReference type="HAMAP" id="MF_01576">
    <property type="entry name" value="THF_DHG_CYH"/>
    <property type="match status" value="1"/>
</dbReference>
<dbReference type="InterPro" id="IPR046346">
    <property type="entry name" value="Aminoacid_DH-like_N_sf"/>
</dbReference>
<dbReference type="InterPro" id="IPR036291">
    <property type="entry name" value="NAD(P)-bd_dom_sf"/>
</dbReference>
<dbReference type="InterPro" id="IPR000672">
    <property type="entry name" value="THF_DH/CycHdrlase"/>
</dbReference>
<dbReference type="InterPro" id="IPR020630">
    <property type="entry name" value="THF_DH/CycHdrlase_cat_dom"/>
</dbReference>
<dbReference type="InterPro" id="IPR020867">
    <property type="entry name" value="THF_DH/CycHdrlase_CS"/>
</dbReference>
<dbReference type="InterPro" id="IPR020631">
    <property type="entry name" value="THF_DH/CycHdrlase_NAD-bd_dom"/>
</dbReference>
<dbReference type="NCBIfam" id="NF008058">
    <property type="entry name" value="PRK10792.1"/>
    <property type="match status" value="1"/>
</dbReference>
<dbReference type="NCBIfam" id="NF010771">
    <property type="entry name" value="PRK14174.1"/>
    <property type="match status" value="1"/>
</dbReference>
<dbReference type="NCBIfam" id="NF010783">
    <property type="entry name" value="PRK14186.1"/>
    <property type="match status" value="1"/>
</dbReference>
<dbReference type="PANTHER" id="PTHR48099:SF5">
    <property type="entry name" value="C-1-TETRAHYDROFOLATE SYNTHASE, CYTOPLASMIC"/>
    <property type="match status" value="1"/>
</dbReference>
<dbReference type="PANTHER" id="PTHR48099">
    <property type="entry name" value="C-1-TETRAHYDROFOLATE SYNTHASE, CYTOPLASMIC-RELATED"/>
    <property type="match status" value="1"/>
</dbReference>
<dbReference type="Pfam" id="PF00763">
    <property type="entry name" value="THF_DHG_CYH"/>
    <property type="match status" value="1"/>
</dbReference>
<dbReference type="Pfam" id="PF02882">
    <property type="entry name" value="THF_DHG_CYH_C"/>
    <property type="match status" value="1"/>
</dbReference>
<dbReference type="PRINTS" id="PR00085">
    <property type="entry name" value="THFDHDRGNASE"/>
</dbReference>
<dbReference type="SUPFAM" id="SSF53223">
    <property type="entry name" value="Aminoacid dehydrogenase-like, N-terminal domain"/>
    <property type="match status" value="1"/>
</dbReference>
<dbReference type="SUPFAM" id="SSF51735">
    <property type="entry name" value="NAD(P)-binding Rossmann-fold domains"/>
    <property type="match status" value="1"/>
</dbReference>
<dbReference type="PROSITE" id="PS00767">
    <property type="entry name" value="THF_DHG_CYH_2"/>
    <property type="match status" value="1"/>
</dbReference>
<evidence type="ECO:0000255" key="1">
    <source>
        <dbReference type="HAMAP-Rule" id="MF_01576"/>
    </source>
</evidence>
<accession>B3EJG9</accession>
<proteinExistence type="inferred from homology"/>
<gene>
    <name evidence="1" type="primary">folD</name>
    <name type="ordered locus">Cphamn1_1442</name>
</gene>
<name>FOLD_CHLPB</name>
<feature type="chain" id="PRO_1000147453" description="Bifunctional protein FolD">
    <location>
        <begin position="1"/>
        <end position="298"/>
    </location>
</feature>
<feature type="binding site" evidence="1">
    <location>
        <begin position="166"/>
        <end position="168"/>
    </location>
    <ligand>
        <name>NADP(+)</name>
        <dbReference type="ChEBI" id="CHEBI:58349"/>
    </ligand>
</feature>
<feature type="binding site" evidence="1">
    <location>
        <position position="195"/>
    </location>
    <ligand>
        <name>NADP(+)</name>
        <dbReference type="ChEBI" id="CHEBI:58349"/>
    </ligand>
</feature>
<feature type="binding site" evidence="1">
    <location>
        <position position="236"/>
    </location>
    <ligand>
        <name>NADP(+)</name>
        <dbReference type="ChEBI" id="CHEBI:58349"/>
    </ligand>
</feature>